<sequence length="854" mass="97923">MPIKESFKRIKSDHQNQNQDQINYVDENVKENLSTYYLVKRISFEYSFKEFLNSDQYLSIDTSIIFSKNIMNALYYLHSNNIIYADLKPSNILIDSKGIFKLNSINNSILIENNNNNNNNNNNNNNNNNNNNNNNQQIMITSRQQIFNLYNNNIDNDNNNNINESIYYLSPEVLKGYTYSFSSDIWSFGVLLFKCITGYYPFYSNDATKLIESIIYDNYLDPIIRLPSDNNDLIQQQHFNDLISKILEKNPQKRITWPKLFIHPFFKNQQTQQVNEIINKSSNTTLQLLNKSSSSSSSSSSSSSSSSSSSSSSSLSFQQQQQPNNISSPNLENQVIRLNKVKIPPLNISQTNSLNDFSNLIENNNFTRLISEFDHSIDFEASPIISPNRPSSPPLSSLSSCSSSSSSSVPIIFNKTIKDLQLLINNNNNNNNNNNNNNNNNNNNNNNNNYQEIIEYFNFISKFIKTKTTIITKLTLLNYLIDLLLLSNNQYSSIIEKLLIIINEHTILIKQLVQQIKISNDTIIKVKIIHLLGIIIGKSNNLSINSKDSIIQLLEYLNNEISSFNNNNNIQLSLKRKLVSTFGEILFYFSTLDEITLSTKWGILSLEKYINTLLNLFLINDSSSPSSSPPPSSSSSSSSPSSPSSTSPSLLSSIPNPSLFPQISLSSIITTNKAIDKTILLYLIKTFDNLLITRPIYIKYFSIKSKQLLNQFLKYIKDDNNLEDELNNNIKISSSSAFYRIIKQQPILSLSLIDNCNESVMINMIDLNQHWRVQISFLNILFILITINNNFIDDNNNINNINNNNNEFIKKFLEKLYNHYINQKNQINPIVFKKSFIFYSILKDFNNNNFIKIN</sequence>
<gene>
    <name type="ORF">DDB_G0274821</name>
</gene>
<evidence type="ECO:0000255" key="1"/>
<evidence type="ECO:0000255" key="2">
    <source>
        <dbReference type="PROSITE-ProRule" id="PRU00159"/>
    </source>
</evidence>
<evidence type="ECO:0000256" key="3">
    <source>
        <dbReference type="SAM" id="MobiDB-lite"/>
    </source>
</evidence>
<evidence type="ECO:0000305" key="4"/>
<organism>
    <name type="scientific">Dictyostelium discoideum</name>
    <name type="common">Social amoeba</name>
    <dbReference type="NCBI Taxonomy" id="44689"/>
    <lineage>
        <taxon>Eukaryota</taxon>
        <taxon>Amoebozoa</taxon>
        <taxon>Evosea</taxon>
        <taxon>Eumycetozoa</taxon>
        <taxon>Dictyostelia</taxon>
        <taxon>Dictyosteliales</taxon>
        <taxon>Dictyosteliaceae</taxon>
        <taxon>Dictyostelium</taxon>
    </lineage>
</organism>
<accession>Q555U5</accession>
<accession>Q86J08</accession>
<proteinExistence type="inferred from homology"/>
<name>Y4821_DICDI</name>
<protein>
    <recommendedName>
        <fullName>Probable inactive serine/threonine-protein kinase DDB_G0274821</fullName>
    </recommendedName>
</protein>
<keyword id="KW-0325">Glycoprotein</keyword>
<keyword id="KW-0472">Membrane</keyword>
<keyword id="KW-1185">Reference proteome</keyword>
<keyword id="KW-0812">Transmembrane</keyword>
<keyword id="KW-1133">Transmembrane helix</keyword>
<reference key="1">
    <citation type="journal article" date="2002" name="Nature">
        <title>Sequence and analysis of chromosome 2 of Dictyostelium discoideum.</title>
        <authorList>
            <person name="Gloeckner G."/>
            <person name="Eichinger L."/>
            <person name="Szafranski K."/>
            <person name="Pachebat J.A."/>
            <person name="Bankier A.T."/>
            <person name="Dear P.H."/>
            <person name="Lehmann R."/>
            <person name="Baumgart C."/>
            <person name="Parra G."/>
            <person name="Abril J.F."/>
            <person name="Guigo R."/>
            <person name="Kumpf K."/>
            <person name="Tunggal B."/>
            <person name="Cox E.C."/>
            <person name="Quail M.A."/>
            <person name="Platzer M."/>
            <person name="Rosenthal A."/>
            <person name="Noegel A.A."/>
        </authorList>
    </citation>
    <scope>NUCLEOTIDE SEQUENCE [LARGE SCALE GENOMIC DNA]</scope>
    <source>
        <strain>AX4</strain>
    </source>
</reference>
<reference key="2">
    <citation type="journal article" date="2005" name="Nature">
        <title>The genome of the social amoeba Dictyostelium discoideum.</title>
        <authorList>
            <person name="Eichinger L."/>
            <person name="Pachebat J.A."/>
            <person name="Gloeckner G."/>
            <person name="Rajandream M.A."/>
            <person name="Sucgang R."/>
            <person name="Berriman M."/>
            <person name="Song J."/>
            <person name="Olsen R."/>
            <person name="Szafranski K."/>
            <person name="Xu Q."/>
            <person name="Tunggal B."/>
            <person name="Kummerfeld S."/>
            <person name="Madera M."/>
            <person name="Konfortov B.A."/>
            <person name="Rivero F."/>
            <person name="Bankier A.T."/>
            <person name="Lehmann R."/>
            <person name="Hamlin N."/>
            <person name="Davies R."/>
            <person name="Gaudet P."/>
            <person name="Fey P."/>
            <person name="Pilcher K."/>
            <person name="Chen G."/>
            <person name="Saunders D."/>
            <person name="Sodergren E.J."/>
            <person name="Davis P."/>
            <person name="Kerhornou A."/>
            <person name="Nie X."/>
            <person name="Hall N."/>
            <person name="Anjard C."/>
            <person name="Hemphill L."/>
            <person name="Bason N."/>
            <person name="Farbrother P."/>
            <person name="Desany B."/>
            <person name="Just E."/>
            <person name="Morio T."/>
            <person name="Rost R."/>
            <person name="Churcher C.M."/>
            <person name="Cooper J."/>
            <person name="Haydock S."/>
            <person name="van Driessche N."/>
            <person name="Cronin A."/>
            <person name="Goodhead I."/>
            <person name="Muzny D.M."/>
            <person name="Mourier T."/>
            <person name="Pain A."/>
            <person name="Lu M."/>
            <person name="Harper D."/>
            <person name="Lindsay R."/>
            <person name="Hauser H."/>
            <person name="James K.D."/>
            <person name="Quiles M."/>
            <person name="Madan Babu M."/>
            <person name="Saito T."/>
            <person name="Buchrieser C."/>
            <person name="Wardroper A."/>
            <person name="Felder M."/>
            <person name="Thangavelu M."/>
            <person name="Johnson D."/>
            <person name="Knights A."/>
            <person name="Loulseged H."/>
            <person name="Mungall K.L."/>
            <person name="Oliver K."/>
            <person name="Price C."/>
            <person name="Quail M.A."/>
            <person name="Urushihara H."/>
            <person name="Hernandez J."/>
            <person name="Rabbinowitsch E."/>
            <person name="Steffen D."/>
            <person name="Sanders M."/>
            <person name="Ma J."/>
            <person name="Kohara Y."/>
            <person name="Sharp S."/>
            <person name="Simmonds M.N."/>
            <person name="Spiegler S."/>
            <person name="Tivey A."/>
            <person name="Sugano S."/>
            <person name="White B."/>
            <person name="Walker D."/>
            <person name="Woodward J.R."/>
            <person name="Winckler T."/>
            <person name="Tanaka Y."/>
            <person name="Shaulsky G."/>
            <person name="Schleicher M."/>
            <person name="Weinstock G.M."/>
            <person name="Rosenthal A."/>
            <person name="Cox E.C."/>
            <person name="Chisholm R.L."/>
            <person name="Gibbs R.A."/>
            <person name="Loomis W.F."/>
            <person name="Platzer M."/>
            <person name="Kay R.R."/>
            <person name="Williams J.G."/>
            <person name="Dear P.H."/>
            <person name="Noegel A.A."/>
            <person name="Barrell B.G."/>
            <person name="Kuspa A."/>
        </authorList>
    </citation>
    <scope>NUCLEOTIDE SEQUENCE [LARGE SCALE GENOMIC DNA]</scope>
    <source>
        <strain>AX4</strain>
    </source>
</reference>
<dbReference type="EMBL" id="AAFI02000012">
    <property type="protein sequence ID" value="EAL70303.1"/>
    <property type="molecule type" value="Genomic_DNA"/>
</dbReference>
<dbReference type="RefSeq" id="XP_643965.1">
    <property type="nucleotide sequence ID" value="XM_638873.1"/>
</dbReference>
<dbReference type="SMR" id="Q555U5"/>
<dbReference type="FunCoup" id="Q555U5">
    <property type="interactions" value="640"/>
</dbReference>
<dbReference type="GlyGen" id="Q555U5">
    <property type="glycosylation" value="14 sites"/>
</dbReference>
<dbReference type="PaxDb" id="44689-DDB0230007"/>
<dbReference type="EnsemblProtists" id="EAL70303">
    <property type="protein sequence ID" value="EAL70303"/>
    <property type="gene ID" value="DDB_G0274821"/>
</dbReference>
<dbReference type="GeneID" id="8619392"/>
<dbReference type="KEGG" id="ddi:DDB_G0274821"/>
<dbReference type="dictyBase" id="DDB_G0274821"/>
<dbReference type="VEuPathDB" id="AmoebaDB:DDB_G0274821"/>
<dbReference type="eggNOG" id="KOG0597">
    <property type="taxonomic scope" value="Eukaryota"/>
</dbReference>
<dbReference type="HOGENOM" id="CLU_334464_0_0_1"/>
<dbReference type="InParanoid" id="Q555U5"/>
<dbReference type="OMA" id="QIMITSR"/>
<dbReference type="PRO" id="PR:Q555U5"/>
<dbReference type="Proteomes" id="UP000002195">
    <property type="component" value="Chromosome 2"/>
</dbReference>
<dbReference type="GO" id="GO:0016020">
    <property type="term" value="C:membrane"/>
    <property type="evidence" value="ECO:0007669"/>
    <property type="project" value="UniProtKB-SubCell"/>
</dbReference>
<dbReference type="GO" id="GO:0005524">
    <property type="term" value="F:ATP binding"/>
    <property type="evidence" value="ECO:0007669"/>
    <property type="project" value="InterPro"/>
</dbReference>
<dbReference type="GO" id="GO:0004672">
    <property type="term" value="F:protein kinase activity"/>
    <property type="evidence" value="ECO:0007669"/>
    <property type="project" value="InterPro"/>
</dbReference>
<dbReference type="Gene3D" id="1.10.510.10">
    <property type="entry name" value="Transferase(Phosphotransferase) domain 1"/>
    <property type="match status" value="1"/>
</dbReference>
<dbReference type="InterPro" id="IPR011009">
    <property type="entry name" value="Kinase-like_dom_sf"/>
</dbReference>
<dbReference type="InterPro" id="IPR000719">
    <property type="entry name" value="Prot_kinase_dom"/>
</dbReference>
<dbReference type="InterPro" id="IPR008271">
    <property type="entry name" value="Ser/Thr_kinase_AS"/>
</dbReference>
<dbReference type="InterPro" id="IPR045906">
    <property type="entry name" value="ULK4"/>
</dbReference>
<dbReference type="PANTHER" id="PTHR46240">
    <property type="entry name" value="SER/THR PROTEIN KINASE ULK4"/>
    <property type="match status" value="1"/>
</dbReference>
<dbReference type="PANTHER" id="PTHR46240:SF1">
    <property type="entry name" value="SERINE_THREONINE-PROTEIN KINASE ULK4"/>
    <property type="match status" value="1"/>
</dbReference>
<dbReference type="Pfam" id="PF00069">
    <property type="entry name" value="Pkinase"/>
    <property type="match status" value="2"/>
</dbReference>
<dbReference type="SMART" id="SM00220">
    <property type="entry name" value="S_TKc"/>
    <property type="match status" value="1"/>
</dbReference>
<dbReference type="SUPFAM" id="SSF56112">
    <property type="entry name" value="Protein kinase-like (PK-like)"/>
    <property type="match status" value="1"/>
</dbReference>
<dbReference type="PROSITE" id="PS50011">
    <property type="entry name" value="PROTEIN_KINASE_DOM"/>
    <property type="match status" value="1"/>
</dbReference>
<dbReference type="PROSITE" id="PS00108">
    <property type="entry name" value="PROTEIN_KINASE_ST"/>
    <property type="match status" value="1"/>
</dbReference>
<comment type="subcellular location">
    <subcellularLocation>
        <location evidence="4">Membrane</location>
        <topology evidence="4">Single-pass membrane protein</topology>
    </subcellularLocation>
</comment>
<comment type="domain">
    <text>The protein kinase domain is predicted to be catalytically inactive.</text>
</comment>
<comment type="similarity">
    <text evidence="2">Belongs to the protein kinase superfamily. Ser/Thr protein kinase family.</text>
</comment>
<feature type="chain" id="PRO_0000362056" description="Probable inactive serine/threonine-protein kinase DDB_G0274821">
    <location>
        <begin position="1"/>
        <end position="854"/>
    </location>
</feature>
<feature type="transmembrane region" description="Helical" evidence="1">
    <location>
        <begin position="770"/>
        <end position="792"/>
    </location>
</feature>
<feature type="domain" description="Protein kinase" evidence="2">
    <location>
        <begin position="1"/>
        <end position="266"/>
    </location>
</feature>
<feature type="region of interest" description="Disordered" evidence="3">
    <location>
        <begin position="116"/>
        <end position="135"/>
    </location>
</feature>
<feature type="region of interest" description="Disordered" evidence="3">
    <location>
        <begin position="289"/>
        <end position="331"/>
    </location>
</feature>
<feature type="region of interest" description="Disordered" evidence="3">
    <location>
        <begin position="384"/>
        <end position="408"/>
    </location>
</feature>
<feature type="region of interest" description="Disordered" evidence="3">
    <location>
        <begin position="425"/>
        <end position="446"/>
    </location>
</feature>
<feature type="region of interest" description="Disordered" evidence="3">
    <location>
        <begin position="627"/>
        <end position="650"/>
    </location>
</feature>
<feature type="compositionally biased region" description="Low complexity" evidence="3">
    <location>
        <begin position="292"/>
        <end position="322"/>
    </location>
</feature>
<feature type="compositionally biased region" description="Low complexity" evidence="3">
    <location>
        <begin position="633"/>
        <end position="650"/>
    </location>
</feature>
<feature type="glycosylation site" description="N-linked (GlcNAc...) asparagine" evidence="1">
    <location>
        <position position="32"/>
    </location>
</feature>
<feature type="glycosylation site" description="N-linked (GlcNAc...) asparagine" evidence="1">
    <location>
        <position position="106"/>
    </location>
</feature>
<feature type="glycosylation site" description="N-linked (GlcNAc...) asparagine" evidence="1">
    <location>
        <position position="163"/>
    </location>
</feature>
<feature type="glycosylation site" description="N-linked (GlcNAc...) asparagine" evidence="1">
    <location>
        <position position="279"/>
    </location>
</feature>
<feature type="glycosylation site" description="N-linked (GlcNAc...) asparagine" evidence="1">
    <location>
        <position position="283"/>
    </location>
</feature>
<feature type="glycosylation site" description="N-linked (GlcNAc...) asparagine" evidence="1">
    <location>
        <position position="290"/>
    </location>
</feature>
<feature type="glycosylation site" description="N-linked (GlcNAc...) asparagine" evidence="1">
    <location>
        <position position="325"/>
    </location>
</feature>
<feature type="glycosylation site" description="N-linked (GlcNAc...) asparagine" evidence="1">
    <location>
        <position position="347"/>
    </location>
</feature>
<feature type="glycosylation site" description="N-linked (GlcNAc...) asparagine" evidence="1">
    <location>
        <position position="365"/>
    </location>
</feature>
<feature type="glycosylation site" description="N-linked (GlcNAc...) asparagine" evidence="1">
    <location>
        <position position="414"/>
    </location>
</feature>
<feature type="glycosylation site" description="N-linked (GlcNAc...) asparagine" evidence="1">
    <location>
        <position position="520"/>
    </location>
</feature>
<feature type="glycosylation site" description="N-linked (GlcNAc...) asparagine" evidence="1">
    <location>
        <position position="541"/>
    </location>
</feature>
<feature type="glycosylation site" description="N-linked (GlcNAc...) asparagine" evidence="1">
    <location>
        <position position="620"/>
    </location>
</feature>
<feature type="glycosylation site" description="N-linked (GlcNAc...) asparagine" evidence="1">
    <location>
        <position position="757"/>
    </location>
</feature>